<reference key="1">
    <citation type="journal article" date="2006" name="Genome Biol.">
        <title>Genomic analysis reveals that Pseudomonas aeruginosa virulence is combinatorial.</title>
        <authorList>
            <person name="Lee D.G."/>
            <person name="Urbach J.M."/>
            <person name="Wu G."/>
            <person name="Liberati N.T."/>
            <person name="Feinbaum R.L."/>
            <person name="Miyata S."/>
            <person name="Diggins L.T."/>
            <person name="He J."/>
            <person name="Saucier M."/>
            <person name="Deziel E."/>
            <person name="Friedman L."/>
            <person name="Li L."/>
            <person name="Grills G."/>
            <person name="Montgomery K."/>
            <person name="Kucherlapati R."/>
            <person name="Rahme L.G."/>
            <person name="Ausubel F.M."/>
        </authorList>
    </citation>
    <scope>NUCLEOTIDE SEQUENCE [LARGE SCALE GENOMIC DNA]</scope>
    <source>
        <strain>UCBPP-PA14</strain>
    </source>
</reference>
<feature type="chain" id="PRO_1000013539" description="Ion-translocating oxidoreductase complex subunit A">
    <location>
        <begin position="1"/>
        <end position="194"/>
    </location>
</feature>
<feature type="transmembrane region" description="Helical" evidence="1">
    <location>
        <begin position="4"/>
        <end position="24"/>
    </location>
</feature>
<feature type="transmembrane region" description="Helical" evidence="1">
    <location>
        <begin position="39"/>
        <end position="59"/>
    </location>
</feature>
<feature type="transmembrane region" description="Helical" evidence="1">
    <location>
        <begin position="72"/>
        <end position="92"/>
    </location>
</feature>
<feature type="transmembrane region" description="Helical" evidence="1">
    <location>
        <begin position="102"/>
        <end position="122"/>
    </location>
</feature>
<feature type="transmembrane region" description="Helical" evidence="1">
    <location>
        <begin position="135"/>
        <end position="155"/>
    </location>
</feature>
<feature type="transmembrane region" description="Helical" evidence="1">
    <location>
        <begin position="172"/>
        <end position="192"/>
    </location>
</feature>
<comment type="function">
    <text evidence="1">Part of a membrane-bound complex that couples electron transfer with translocation of ions across the membrane.</text>
</comment>
<comment type="subunit">
    <text evidence="1">The complex is composed of six subunits: RnfA, RnfB, RnfC, RnfD, RnfE and RnfG.</text>
</comment>
<comment type="subcellular location">
    <subcellularLocation>
        <location evidence="1">Cell inner membrane</location>
        <topology evidence="1">Multi-pass membrane protein</topology>
    </subcellularLocation>
</comment>
<comment type="similarity">
    <text evidence="1">Belongs to the NqrDE/RnfAE family.</text>
</comment>
<evidence type="ECO:0000255" key="1">
    <source>
        <dbReference type="HAMAP-Rule" id="MF_00459"/>
    </source>
</evidence>
<proteinExistence type="inferred from homology"/>
<dbReference type="EC" id="7.-.-.-" evidence="1"/>
<dbReference type="EMBL" id="CP000438">
    <property type="protein sequence ID" value="ABJ12742.1"/>
    <property type="molecule type" value="Genomic_DNA"/>
</dbReference>
<dbReference type="SMR" id="Q02QX8"/>
<dbReference type="KEGG" id="pau:PA14_18950"/>
<dbReference type="PseudoCAP" id="PA14_18950"/>
<dbReference type="HOGENOM" id="CLU_095255_1_0_6"/>
<dbReference type="BioCyc" id="PAER208963:G1G74-1562-MONOMER"/>
<dbReference type="Proteomes" id="UP000000653">
    <property type="component" value="Chromosome"/>
</dbReference>
<dbReference type="GO" id="GO:0005886">
    <property type="term" value="C:plasma membrane"/>
    <property type="evidence" value="ECO:0007669"/>
    <property type="project" value="UniProtKB-SubCell"/>
</dbReference>
<dbReference type="GO" id="GO:0022900">
    <property type="term" value="P:electron transport chain"/>
    <property type="evidence" value="ECO:0007669"/>
    <property type="project" value="UniProtKB-UniRule"/>
</dbReference>
<dbReference type="HAMAP" id="MF_00459">
    <property type="entry name" value="RsxA_RnfA"/>
    <property type="match status" value="1"/>
</dbReference>
<dbReference type="InterPro" id="IPR011293">
    <property type="entry name" value="Ion_transpt_RnfA/RsxA"/>
</dbReference>
<dbReference type="InterPro" id="IPR003667">
    <property type="entry name" value="NqrDE/RnfAE"/>
</dbReference>
<dbReference type="InterPro" id="IPR050133">
    <property type="entry name" value="NqrDE/RnfAE_oxidrdctase"/>
</dbReference>
<dbReference type="NCBIfam" id="NF003481">
    <property type="entry name" value="PRK05151.1"/>
    <property type="match status" value="1"/>
</dbReference>
<dbReference type="NCBIfam" id="TIGR01943">
    <property type="entry name" value="rnfA"/>
    <property type="match status" value="1"/>
</dbReference>
<dbReference type="PANTHER" id="PTHR30335">
    <property type="entry name" value="INTEGRAL MEMBRANE PROTEIN OF SOXR-REDUCING COMPLEX"/>
    <property type="match status" value="1"/>
</dbReference>
<dbReference type="PANTHER" id="PTHR30335:SF0">
    <property type="entry name" value="ION-TRANSLOCATING OXIDOREDUCTASE COMPLEX SUBUNIT A"/>
    <property type="match status" value="1"/>
</dbReference>
<dbReference type="Pfam" id="PF02508">
    <property type="entry name" value="Rnf-Nqr"/>
    <property type="match status" value="1"/>
</dbReference>
<dbReference type="PIRSF" id="PIRSF006102">
    <property type="entry name" value="NQR_DE"/>
    <property type="match status" value="1"/>
</dbReference>
<gene>
    <name evidence="1" type="primary">rnfA</name>
    <name type="ordered locus">PA14_18950</name>
</gene>
<name>RNFA_PSEAB</name>
<accession>Q02QX8</accession>
<protein>
    <recommendedName>
        <fullName evidence="1">Ion-translocating oxidoreductase complex subunit A</fullName>
        <ecNumber evidence="1">7.-.-.-</ecNumber>
    </recommendedName>
    <alternativeName>
        <fullName evidence="1">Rnf electron transport complex subunit A</fullName>
    </alternativeName>
</protein>
<sequence>MTELALILVSAILVNNFVLVQFLGLCPFMGVSRKIETAIGLSLATTFVLTLAAMCSHILQRYVLRPLDLEYLRTIGFILVIAVVVQFTEMLVKKTSPLLYRVLGIFLPLITTNCIVLGVALLNANKAEYGFLQATTQGFGAGLGFSLVLVLFAALRERIAIADVPAPFRGAAIGMITAGLMSLAFMGFSGLVRP</sequence>
<keyword id="KW-0997">Cell inner membrane</keyword>
<keyword id="KW-1003">Cell membrane</keyword>
<keyword id="KW-0249">Electron transport</keyword>
<keyword id="KW-0472">Membrane</keyword>
<keyword id="KW-1278">Translocase</keyword>
<keyword id="KW-0812">Transmembrane</keyword>
<keyword id="KW-1133">Transmembrane helix</keyword>
<keyword id="KW-0813">Transport</keyword>
<organism>
    <name type="scientific">Pseudomonas aeruginosa (strain UCBPP-PA14)</name>
    <dbReference type="NCBI Taxonomy" id="208963"/>
    <lineage>
        <taxon>Bacteria</taxon>
        <taxon>Pseudomonadati</taxon>
        <taxon>Pseudomonadota</taxon>
        <taxon>Gammaproteobacteria</taxon>
        <taxon>Pseudomonadales</taxon>
        <taxon>Pseudomonadaceae</taxon>
        <taxon>Pseudomonas</taxon>
    </lineage>
</organism>